<gene>
    <name type="primary">TPP1</name>
    <name type="ordered locus">YMR156C</name>
    <name type="ORF">YM8520.05C</name>
</gene>
<accession>Q03796</accession>
<accession>D6VZX7</accession>
<evidence type="ECO:0000269" key="1">
    <source>
    </source>
</evidence>
<evidence type="ECO:0000303" key="2">
    <source>
    </source>
</evidence>
<evidence type="ECO:0000305" key="3"/>
<keyword id="KW-0227">DNA damage</keyword>
<keyword id="KW-0234">DNA repair</keyword>
<keyword id="KW-0378">Hydrolase</keyword>
<keyword id="KW-0539">Nucleus</keyword>
<keyword id="KW-1185">Reference proteome</keyword>
<organism>
    <name type="scientific">Saccharomyces cerevisiae (strain ATCC 204508 / S288c)</name>
    <name type="common">Baker's yeast</name>
    <dbReference type="NCBI Taxonomy" id="559292"/>
    <lineage>
        <taxon>Eukaryota</taxon>
        <taxon>Fungi</taxon>
        <taxon>Dikarya</taxon>
        <taxon>Ascomycota</taxon>
        <taxon>Saccharomycotina</taxon>
        <taxon>Saccharomycetes</taxon>
        <taxon>Saccharomycetales</taxon>
        <taxon>Saccharomycetaceae</taxon>
        <taxon>Saccharomyces</taxon>
    </lineage>
</organism>
<dbReference type="EC" id="3.1.3.32" evidence="1"/>
<dbReference type="EMBL" id="Z49705">
    <property type="protein sequence ID" value="CAA89792.1"/>
    <property type="molecule type" value="Genomic_DNA"/>
</dbReference>
<dbReference type="EMBL" id="AY557979">
    <property type="protein sequence ID" value="AAS56305.1"/>
    <property type="molecule type" value="Genomic_DNA"/>
</dbReference>
<dbReference type="EMBL" id="BK006946">
    <property type="protein sequence ID" value="DAA10051.1"/>
    <property type="molecule type" value="Genomic_DNA"/>
</dbReference>
<dbReference type="PIR" id="S54514">
    <property type="entry name" value="S54514"/>
</dbReference>
<dbReference type="RefSeq" id="NP_013877.1">
    <property type="nucleotide sequence ID" value="NM_001182659.1"/>
</dbReference>
<dbReference type="SMR" id="Q03796"/>
<dbReference type="BioGRID" id="35331">
    <property type="interactions" value="60"/>
</dbReference>
<dbReference type="FunCoup" id="Q03796">
    <property type="interactions" value="13"/>
</dbReference>
<dbReference type="IntAct" id="Q03796">
    <property type="interactions" value="4"/>
</dbReference>
<dbReference type="MINT" id="Q03796"/>
<dbReference type="STRING" id="4932.YMR156C"/>
<dbReference type="iPTMnet" id="Q03796"/>
<dbReference type="PaxDb" id="4932-YMR156C"/>
<dbReference type="PeptideAtlas" id="Q03796"/>
<dbReference type="EnsemblFungi" id="YMR156C_mRNA">
    <property type="protein sequence ID" value="YMR156C"/>
    <property type="gene ID" value="YMR156C"/>
</dbReference>
<dbReference type="GeneID" id="855188"/>
<dbReference type="KEGG" id="sce:YMR156C"/>
<dbReference type="AGR" id="SGD:S000004765"/>
<dbReference type="SGD" id="S000004765">
    <property type="gene designation" value="TPP1"/>
</dbReference>
<dbReference type="VEuPathDB" id="FungiDB:YMR156C"/>
<dbReference type="eggNOG" id="KOG2134">
    <property type="taxonomic scope" value="Eukaryota"/>
</dbReference>
<dbReference type="GeneTree" id="ENSGT00940000159302"/>
<dbReference type="HOGENOM" id="CLU_014938_0_0_1"/>
<dbReference type="InParanoid" id="Q03796"/>
<dbReference type="OMA" id="LINNIWI"/>
<dbReference type="OrthoDB" id="19045at2759"/>
<dbReference type="BioCyc" id="YEAST:G3O-32846-MONOMER"/>
<dbReference type="BioGRID-ORCS" id="855188">
    <property type="hits" value="0 hits in 10 CRISPR screens"/>
</dbReference>
<dbReference type="PRO" id="PR:Q03796"/>
<dbReference type="Proteomes" id="UP000002311">
    <property type="component" value="Chromosome XIII"/>
</dbReference>
<dbReference type="RNAct" id="Q03796">
    <property type="molecule type" value="protein"/>
</dbReference>
<dbReference type="GO" id="GO:0005634">
    <property type="term" value="C:nucleus"/>
    <property type="evidence" value="ECO:0000305"/>
    <property type="project" value="SGD"/>
</dbReference>
<dbReference type="GO" id="GO:0046404">
    <property type="term" value="F:ATP-dependent polydeoxyribonucleotide 5'-hydroxyl-kinase activity"/>
    <property type="evidence" value="ECO:0000318"/>
    <property type="project" value="GO_Central"/>
</dbReference>
<dbReference type="GO" id="GO:0003690">
    <property type="term" value="F:double-stranded DNA binding"/>
    <property type="evidence" value="ECO:0000314"/>
    <property type="project" value="SGD"/>
</dbReference>
<dbReference type="GO" id="GO:0046403">
    <property type="term" value="F:polynucleotide 3'-phosphatase activity"/>
    <property type="evidence" value="ECO:0000314"/>
    <property type="project" value="SGD"/>
</dbReference>
<dbReference type="GO" id="GO:0006281">
    <property type="term" value="P:DNA repair"/>
    <property type="evidence" value="ECO:0000318"/>
    <property type="project" value="GO_Central"/>
</dbReference>
<dbReference type="GO" id="GO:0006302">
    <property type="term" value="P:double-strand break repair"/>
    <property type="evidence" value="ECO:0000315"/>
    <property type="project" value="SGD"/>
</dbReference>
<dbReference type="Gene3D" id="3.40.50.1000">
    <property type="entry name" value="HAD superfamily/HAD-like"/>
    <property type="match status" value="1"/>
</dbReference>
<dbReference type="InterPro" id="IPR036412">
    <property type="entry name" value="HAD-like_sf"/>
</dbReference>
<dbReference type="InterPro" id="IPR023214">
    <property type="entry name" value="HAD_sf"/>
</dbReference>
<dbReference type="InterPro" id="IPR013954">
    <property type="entry name" value="PNK3P"/>
</dbReference>
<dbReference type="InterPro" id="IPR006551">
    <property type="entry name" value="Polynucleotide_phosphatase"/>
</dbReference>
<dbReference type="NCBIfam" id="TIGR01664">
    <property type="entry name" value="DNA-3'-Pase"/>
    <property type="match status" value="1"/>
</dbReference>
<dbReference type="PANTHER" id="PTHR12083">
    <property type="entry name" value="BIFUNCTIONAL POLYNUCLEOTIDE PHOSPHATASE/KINASE"/>
    <property type="match status" value="1"/>
</dbReference>
<dbReference type="PANTHER" id="PTHR12083:SF9">
    <property type="entry name" value="BIFUNCTIONAL POLYNUCLEOTIDE PHOSPHATASE_KINASE"/>
    <property type="match status" value="1"/>
</dbReference>
<dbReference type="Pfam" id="PF08645">
    <property type="entry name" value="PNK3P"/>
    <property type="match status" value="1"/>
</dbReference>
<dbReference type="SUPFAM" id="SSF56784">
    <property type="entry name" value="HAD-like"/>
    <property type="match status" value="1"/>
</dbReference>
<name>TPP1_YEAST</name>
<reference key="1">
    <citation type="journal article" date="1997" name="Nature">
        <title>The nucleotide sequence of Saccharomyces cerevisiae chromosome XIII.</title>
        <authorList>
            <person name="Bowman S."/>
            <person name="Churcher C.M."/>
            <person name="Badcock K."/>
            <person name="Brown D."/>
            <person name="Chillingworth T."/>
            <person name="Connor R."/>
            <person name="Dedman K."/>
            <person name="Devlin K."/>
            <person name="Gentles S."/>
            <person name="Hamlin N."/>
            <person name="Hunt S."/>
            <person name="Jagels K."/>
            <person name="Lye G."/>
            <person name="Moule S."/>
            <person name="Odell C."/>
            <person name="Pearson D."/>
            <person name="Rajandream M.A."/>
            <person name="Rice P."/>
            <person name="Skelton J."/>
            <person name="Walsh S.V."/>
            <person name="Whitehead S."/>
            <person name="Barrell B.G."/>
        </authorList>
    </citation>
    <scope>NUCLEOTIDE SEQUENCE [LARGE SCALE GENOMIC DNA]</scope>
    <source>
        <strain>ATCC 204508 / S288c</strain>
    </source>
</reference>
<reference key="2">
    <citation type="journal article" date="2014" name="G3 (Bethesda)">
        <title>The reference genome sequence of Saccharomyces cerevisiae: Then and now.</title>
        <authorList>
            <person name="Engel S.R."/>
            <person name="Dietrich F.S."/>
            <person name="Fisk D.G."/>
            <person name="Binkley G."/>
            <person name="Balakrishnan R."/>
            <person name="Costanzo M.C."/>
            <person name="Dwight S.S."/>
            <person name="Hitz B.C."/>
            <person name="Karra K."/>
            <person name="Nash R.S."/>
            <person name="Weng S."/>
            <person name="Wong E.D."/>
            <person name="Lloyd P."/>
            <person name="Skrzypek M.S."/>
            <person name="Miyasato S.R."/>
            <person name="Simison M."/>
            <person name="Cherry J.M."/>
        </authorList>
    </citation>
    <scope>GENOME REANNOTATION</scope>
    <source>
        <strain>ATCC 204508 / S288c</strain>
    </source>
</reference>
<reference key="3">
    <citation type="journal article" date="2007" name="Genome Res.">
        <title>Approaching a complete repository of sequence-verified protein-encoding clones for Saccharomyces cerevisiae.</title>
        <authorList>
            <person name="Hu Y."/>
            <person name="Rolfs A."/>
            <person name="Bhullar B."/>
            <person name="Murthy T.V.S."/>
            <person name="Zhu C."/>
            <person name="Berger M.F."/>
            <person name="Camargo A.A."/>
            <person name="Kelley F."/>
            <person name="McCarron S."/>
            <person name="Jepson D."/>
            <person name="Richardson A."/>
            <person name="Raphael J."/>
            <person name="Moreira D."/>
            <person name="Taycher E."/>
            <person name="Zuo D."/>
            <person name="Mohr S."/>
            <person name="Kane M.F."/>
            <person name="Williamson J."/>
            <person name="Simpson A.J.G."/>
            <person name="Bulyk M.L."/>
            <person name="Harlow E."/>
            <person name="Marsischky G."/>
            <person name="Kolodner R.D."/>
            <person name="LaBaer J."/>
        </authorList>
    </citation>
    <scope>NUCLEOTIDE SEQUENCE [GENOMIC DNA]</scope>
    <source>
        <strain>ATCC 204508 / S288c</strain>
    </source>
</reference>
<reference key="4">
    <citation type="journal article" date="2001" name="J. Biol. Chem.">
        <title>Uncoupling of 3'-phosphatase and 5'-kinase functions in budding yeast. Characterization of Saccharomyces cerevisiae DNA 3'-phosphatase (TPP1).</title>
        <authorList>
            <person name="Vance J.R."/>
            <person name="Wilson T.E."/>
        </authorList>
    </citation>
    <scope>FUNCTION</scope>
    <scope>CATALYTIC ACTIVITY</scope>
</reference>
<sequence>MSHKLTILPFLIKFTPKFPQSIDHDEHGLNVYAFDLDHTIIKPKSPNISFSRSASDWQFINFNSKKSTLDYLCNIIDNDPTAVIVIFSNQGGVITVPRTSKSCTKYTNKILLFLKAIKNDERGETLSHRLWLYAAPKRPKTFAANHSKITFASLGESYNNDPNIFEKVRKPMTGMVEFFKRDLESAYRVSEQISPIKLNWIYYCGDAAGRKKDFSDSDIKFAENLHVEFKYPEEIFHG</sequence>
<proteinExistence type="evidence at protein level"/>
<protein>
    <recommendedName>
        <fullName evidence="2">Polynucleotide 3'-phosphatase</fullName>
        <ecNumber evidence="1">3.1.3.32</ecNumber>
    </recommendedName>
    <alternativeName>
        <fullName>2'(3')-polynucleotidase</fullName>
    </alternativeName>
    <alternativeName>
        <fullName>DNA 3'-phosphatase</fullName>
    </alternativeName>
    <alternativeName>
        <fullName>Three prime phosphatase</fullName>
    </alternativeName>
</protein>
<feature type="chain" id="PRO_0000065580" description="Polynucleotide 3'-phosphatase">
    <location>
        <begin position="1"/>
        <end position="238"/>
    </location>
</feature>
<comment type="function">
    <text evidence="1">Dephosphorylate DNA's 3'-phosphate termini. Has a role in the repair of breaks in single-stranded DNA.</text>
</comment>
<comment type="catalytic activity">
    <reaction evidence="1">
        <text>a 3'end (2'-deoxyribonucleotide 3'-phosphate)-DNA + H2O = a 3'-end 2'-deoxyribonucleotide-DNA + phosphate</text>
        <dbReference type="Rhea" id="RHEA:14113"/>
        <dbReference type="Rhea" id="RHEA-COMP:13863"/>
        <dbReference type="Rhea" id="RHEA-COMP:13864"/>
        <dbReference type="ChEBI" id="CHEBI:15377"/>
        <dbReference type="ChEBI" id="CHEBI:43474"/>
        <dbReference type="ChEBI" id="CHEBI:138147"/>
        <dbReference type="ChEBI" id="CHEBI:138148"/>
        <dbReference type="EC" id="3.1.3.32"/>
    </reaction>
</comment>
<comment type="subcellular location">
    <subcellularLocation>
        <location evidence="3">Nucleus</location>
    </subcellularLocation>
</comment>
<comment type="similarity">
    <text evidence="3">Belongs to the DNA 3' phosphatase family.</text>
</comment>